<sequence length="588" mass="68636">MTDKWVPGQGQPMYGSQQPHNLMPPPSGLYQQNSNQSNTSLDQQQQFNQQQYNSQQQYQQQQHSQYQQQQQQHQQQQQQQQQQQQQQQQQQQQQQQQHQQHQQQQQQPQQQSVAQQQPSDYVNFTPRPDLLSKTARDRAHNTTQVISTYYKGIVQHAIERHQRRSAAEASVEQATSEERRNRVLTNYGKKETAYLRMRRTRMALEDFVTVKVIGKGAFGEVRLVQKRDNGKIYAMKTMLKKEMDMKEQWAHVKAERDVLADSDSPWIVSLYFSFQDDLYLYLIMEFLPGGDLMTMLIKYDVFSEDITRFYIAECVLAIEAIHKLGFIHRDIKPDNILIDKTGHIKLSDFGLSTGFHKTHSSAYWKKLKDGTSSNPATQMGPPQNTNRQSTYDSIHLTMRQQISTWRKNRRLMAYSTVGTPDYIAPEIFVHQGYGQECDWWSLGAIMFECLVGWPPFCSEQPRETYHKIINWRETLQFPDDVHLSPESEDLIRRLLTSSENRLGRIGGANEIKSHPFFRGVDWSSIREFNAPFVPKLSSITDTSYFPTDELGDVSEYPQQSSRSDRSSDLPFIGYTFSRFDNMTRRNAI</sequence>
<keyword id="KW-0067">ATP-binding</keyword>
<keyword id="KW-0418">Kinase</keyword>
<keyword id="KW-0547">Nucleotide-binding</keyword>
<keyword id="KW-0597">Phosphoprotein</keyword>
<keyword id="KW-1185">Reference proteome</keyword>
<keyword id="KW-0723">Serine/threonine-protein kinase</keyword>
<keyword id="KW-0808">Transferase</keyword>
<gene>
    <name type="primary">CBK1</name>
    <name type="ordered locus">YALI0B04268g</name>
</gene>
<proteinExistence type="inferred from homology"/>
<accession>Q6CFS5</accession>
<organism>
    <name type="scientific">Yarrowia lipolytica (strain CLIB 122 / E 150)</name>
    <name type="common">Yeast</name>
    <name type="synonym">Candida lipolytica</name>
    <dbReference type="NCBI Taxonomy" id="284591"/>
    <lineage>
        <taxon>Eukaryota</taxon>
        <taxon>Fungi</taxon>
        <taxon>Dikarya</taxon>
        <taxon>Ascomycota</taxon>
        <taxon>Saccharomycotina</taxon>
        <taxon>Dipodascomycetes</taxon>
        <taxon>Dipodascales</taxon>
        <taxon>Dipodascales incertae sedis</taxon>
        <taxon>Yarrowia</taxon>
    </lineage>
</organism>
<feature type="chain" id="PRO_0000085696" description="Serine/threonine-protein kinase CBK1">
    <location>
        <begin position="1"/>
        <end position="588"/>
    </location>
</feature>
<feature type="domain" description="Protein kinase" evidence="2">
    <location>
        <begin position="207"/>
        <end position="517"/>
    </location>
</feature>
<feature type="domain" description="AGC-kinase C-terminal" evidence="3">
    <location>
        <begin position="518"/>
        <end position="586"/>
    </location>
</feature>
<feature type="region of interest" description="Disordered" evidence="5">
    <location>
        <begin position="1"/>
        <end position="76"/>
    </location>
</feature>
<feature type="region of interest" description="Disordered" evidence="5">
    <location>
        <begin position="100"/>
        <end position="139"/>
    </location>
</feature>
<feature type="region of interest" description="Disordered" evidence="5">
    <location>
        <begin position="370"/>
        <end position="389"/>
    </location>
</feature>
<feature type="compositionally biased region" description="Polar residues" evidence="5">
    <location>
        <begin position="29"/>
        <end position="42"/>
    </location>
</feature>
<feature type="compositionally biased region" description="Low complexity" evidence="5">
    <location>
        <begin position="43"/>
        <end position="76"/>
    </location>
</feature>
<feature type="compositionally biased region" description="Low complexity" evidence="5">
    <location>
        <begin position="100"/>
        <end position="117"/>
    </location>
</feature>
<feature type="active site" description="Proton acceptor" evidence="2 4">
    <location>
        <position position="330"/>
    </location>
</feature>
<feature type="binding site" evidence="2">
    <location>
        <begin position="213"/>
        <end position="221"/>
    </location>
    <ligand>
        <name>ATP</name>
        <dbReference type="ChEBI" id="CHEBI:30616"/>
    </ligand>
</feature>
<feature type="binding site" evidence="2">
    <location>
        <position position="236"/>
    </location>
    <ligand>
        <name>ATP</name>
        <dbReference type="ChEBI" id="CHEBI:30616"/>
    </ligand>
</feature>
<dbReference type="EC" id="2.7.11.1"/>
<dbReference type="EMBL" id="CR382128">
    <property type="protein sequence ID" value="CAG82714.1"/>
    <property type="molecule type" value="Genomic_DNA"/>
</dbReference>
<dbReference type="RefSeq" id="XP_500487.1">
    <property type="nucleotide sequence ID" value="XM_500487.1"/>
</dbReference>
<dbReference type="SMR" id="Q6CFS5"/>
<dbReference type="FunCoup" id="Q6CFS5">
    <property type="interactions" value="561"/>
</dbReference>
<dbReference type="STRING" id="284591.Q6CFS5"/>
<dbReference type="EnsemblFungi" id="CAG82714">
    <property type="protein sequence ID" value="CAG82714"/>
    <property type="gene ID" value="YALI0_B04268g"/>
</dbReference>
<dbReference type="KEGG" id="yli:2907431"/>
<dbReference type="VEuPathDB" id="FungiDB:YALI0_B04268g"/>
<dbReference type="HOGENOM" id="CLU_000288_67_2_1"/>
<dbReference type="InParanoid" id="Q6CFS5"/>
<dbReference type="OMA" id="HDNAYYQ"/>
<dbReference type="OrthoDB" id="21179at4891"/>
<dbReference type="Proteomes" id="UP000001300">
    <property type="component" value="Chromosome B"/>
</dbReference>
<dbReference type="GO" id="GO:0051285">
    <property type="term" value="C:cell cortex of cell tip"/>
    <property type="evidence" value="ECO:0007669"/>
    <property type="project" value="EnsemblFungi"/>
</dbReference>
<dbReference type="GO" id="GO:0032153">
    <property type="term" value="C:cell division site"/>
    <property type="evidence" value="ECO:0007669"/>
    <property type="project" value="EnsemblFungi"/>
</dbReference>
<dbReference type="GO" id="GO:0005935">
    <property type="term" value="C:cellular bud neck"/>
    <property type="evidence" value="ECO:0007669"/>
    <property type="project" value="EnsemblFungi"/>
</dbReference>
<dbReference type="GO" id="GO:0005934">
    <property type="term" value="C:cellular bud tip"/>
    <property type="evidence" value="ECO:0007669"/>
    <property type="project" value="EnsemblFungi"/>
</dbReference>
<dbReference type="GO" id="GO:0035838">
    <property type="term" value="C:growing cell tip"/>
    <property type="evidence" value="ECO:0007669"/>
    <property type="project" value="EnsemblFungi"/>
</dbReference>
<dbReference type="GO" id="GO:0000131">
    <property type="term" value="C:incipient cellular bud site"/>
    <property type="evidence" value="ECO:0007669"/>
    <property type="project" value="EnsemblFungi"/>
</dbReference>
<dbReference type="GO" id="GO:0043332">
    <property type="term" value="C:mating projection tip"/>
    <property type="evidence" value="ECO:0007669"/>
    <property type="project" value="EnsemblFungi"/>
</dbReference>
<dbReference type="GO" id="GO:0005634">
    <property type="term" value="C:nucleus"/>
    <property type="evidence" value="ECO:0007669"/>
    <property type="project" value="EnsemblFungi"/>
</dbReference>
<dbReference type="GO" id="GO:1902554">
    <property type="term" value="C:serine/threonine protein kinase complex"/>
    <property type="evidence" value="ECO:0007669"/>
    <property type="project" value="EnsemblFungi"/>
</dbReference>
<dbReference type="GO" id="GO:0005524">
    <property type="term" value="F:ATP binding"/>
    <property type="evidence" value="ECO:0007669"/>
    <property type="project" value="UniProtKB-KW"/>
</dbReference>
<dbReference type="GO" id="GO:0042802">
    <property type="term" value="F:identical protein binding"/>
    <property type="evidence" value="ECO:0007669"/>
    <property type="project" value="EnsemblFungi"/>
</dbReference>
<dbReference type="GO" id="GO:0106310">
    <property type="term" value="F:protein serine kinase activity"/>
    <property type="evidence" value="ECO:0007669"/>
    <property type="project" value="RHEA"/>
</dbReference>
<dbReference type="GO" id="GO:0004674">
    <property type="term" value="F:protein serine/threonine kinase activity"/>
    <property type="evidence" value="ECO:0000318"/>
    <property type="project" value="GO_Central"/>
</dbReference>
<dbReference type="GO" id="GO:0007118">
    <property type="term" value="P:budding cell apical bud growth"/>
    <property type="evidence" value="ECO:0007669"/>
    <property type="project" value="EnsemblFungi"/>
</dbReference>
<dbReference type="GO" id="GO:0071472">
    <property type="term" value="P:cellular response to salt stress"/>
    <property type="evidence" value="ECO:0007669"/>
    <property type="project" value="EnsemblFungi"/>
</dbReference>
<dbReference type="GO" id="GO:0030866">
    <property type="term" value="P:cortical actin cytoskeleton organization"/>
    <property type="evidence" value="ECO:0007669"/>
    <property type="project" value="EnsemblFungi"/>
</dbReference>
<dbReference type="GO" id="GO:0030950">
    <property type="term" value="P:establishment or maintenance of actin cytoskeleton polarity"/>
    <property type="evidence" value="ECO:0007669"/>
    <property type="project" value="EnsemblFungi"/>
</dbReference>
<dbReference type="GO" id="GO:0035556">
    <property type="term" value="P:intracellular signal transduction"/>
    <property type="evidence" value="ECO:0000318"/>
    <property type="project" value="GO_Central"/>
</dbReference>
<dbReference type="GO" id="GO:0097248">
    <property type="term" value="P:maintenance of protein location in cell cortex of cell tip"/>
    <property type="evidence" value="ECO:0007669"/>
    <property type="project" value="EnsemblFungi"/>
</dbReference>
<dbReference type="GO" id="GO:2000247">
    <property type="term" value="P:positive regulation of establishment or maintenance of bipolar cell polarity regulating cell shape"/>
    <property type="evidence" value="ECO:0007669"/>
    <property type="project" value="EnsemblFungi"/>
</dbReference>
<dbReference type="GO" id="GO:0045921">
    <property type="term" value="P:positive regulation of exocytosis"/>
    <property type="evidence" value="ECO:0007669"/>
    <property type="project" value="EnsemblFungi"/>
</dbReference>
<dbReference type="GO" id="GO:0062200">
    <property type="term" value="P:RAM/MOR signaling"/>
    <property type="evidence" value="ECO:0007669"/>
    <property type="project" value="EnsemblFungi"/>
</dbReference>
<dbReference type="GO" id="GO:0032995">
    <property type="term" value="P:regulation of fungal-type cell wall biogenesis"/>
    <property type="evidence" value="ECO:0007669"/>
    <property type="project" value="EnsemblFungi"/>
</dbReference>
<dbReference type="GO" id="GO:0060237">
    <property type="term" value="P:regulation of fungal-type cell wall organization"/>
    <property type="evidence" value="ECO:0007669"/>
    <property type="project" value="EnsemblFungi"/>
</dbReference>
<dbReference type="GO" id="GO:0070507">
    <property type="term" value="P:regulation of microtubule cytoskeleton organization"/>
    <property type="evidence" value="ECO:0007669"/>
    <property type="project" value="EnsemblFungi"/>
</dbReference>
<dbReference type="GO" id="GO:0050708">
    <property type="term" value="P:regulation of protein secretion"/>
    <property type="evidence" value="ECO:0007669"/>
    <property type="project" value="EnsemblFungi"/>
</dbReference>
<dbReference type="GO" id="GO:0000920">
    <property type="term" value="P:septum digestion after cytokinesis"/>
    <property type="evidence" value="ECO:0007669"/>
    <property type="project" value="EnsemblFungi"/>
</dbReference>
<dbReference type="CDD" id="cd21776">
    <property type="entry name" value="MobB_Sid2p-like"/>
    <property type="match status" value="1"/>
</dbReference>
<dbReference type="FunFam" id="1.10.510.10:FF:000086">
    <property type="entry name" value="Non-specific serine/threonine protein kinase"/>
    <property type="match status" value="1"/>
</dbReference>
<dbReference type="FunFam" id="1.10.510.10:FF:000828">
    <property type="entry name" value="Serine/threonine-protein kinase CBK1"/>
    <property type="match status" value="1"/>
</dbReference>
<dbReference type="FunFam" id="3.30.200.20:FF:000192">
    <property type="entry name" value="Serine/threonine-protein kinase cot-1"/>
    <property type="match status" value="1"/>
</dbReference>
<dbReference type="Gene3D" id="3.30.200.20">
    <property type="entry name" value="Phosphorylase Kinase, domain 1"/>
    <property type="match status" value="2"/>
</dbReference>
<dbReference type="Gene3D" id="1.10.510.10">
    <property type="entry name" value="Transferase(Phosphotransferase) domain 1"/>
    <property type="match status" value="2"/>
</dbReference>
<dbReference type="InterPro" id="IPR000961">
    <property type="entry name" value="AGC-kinase_C"/>
</dbReference>
<dbReference type="InterPro" id="IPR011009">
    <property type="entry name" value="Kinase-like_dom_sf"/>
</dbReference>
<dbReference type="InterPro" id="IPR000719">
    <property type="entry name" value="Prot_kinase_dom"/>
</dbReference>
<dbReference type="InterPro" id="IPR017441">
    <property type="entry name" value="Protein_kinase_ATP_BS"/>
</dbReference>
<dbReference type="InterPro" id="IPR050839">
    <property type="entry name" value="Rho-assoc_Ser/Thr_Kinase"/>
</dbReference>
<dbReference type="InterPro" id="IPR008271">
    <property type="entry name" value="Ser/Thr_kinase_AS"/>
</dbReference>
<dbReference type="PANTHER" id="PTHR22988">
    <property type="entry name" value="MYOTONIC DYSTROPHY S/T KINASE-RELATED"/>
    <property type="match status" value="1"/>
</dbReference>
<dbReference type="Pfam" id="PF00069">
    <property type="entry name" value="Pkinase"/>
    <property type="match status" value="2"/>
</dbReference>
<dbReference type="SMART" id="SM00133">
    <property type="entry name" value="S_TK_X"/>
    <property type="match status" value="1"/>
</dbReference>
<dbReference type="SMART" id="SM00220">
    <property type="entry name" value="S_TKc"/>
    <property type="match status" value="1"/>
</dbReference>
<dbReference type="SUPFAM" id="SSF56112">
    <property type="entry name" value="Protein kinase-like (PK-like)"/>
    <property type="match status" value="1"/>
</dbReference>
<dbReference type="PROSITE" id="PS51285">
    <property type="entry name" value="AGC_KINASE_CTER"/>
    <property type="match status" value="1"/>
</dbReference>
<dbReference type="PROSITE" id="PS00107">
    <property type="entry name" value="PROTEIN_KINASE_ATP"/>
    <property type="match status" value="1"/>
</dbReference>
<dbReference type="PROSITE" id="PS50011">
    <property type="entry name" value="PROTEIN_KINASE_DOM"/>
    <property type="match status" value="1"/>
</dbReference>
<dbReference type="PROSITE" id="PS00108">
    <property type="entry name" value="PROTEIN_KINASE_ST"/>
    <property type="match status" value="1"/>
</dbReference>
<comment type="function">
    <text evidence="1">Protein kinase that seems to play a role in the regulation of cell morphogenesis and proliferation.</text>
</comment>
<comment type="catalytic activity">
    <reaction>
        <text>L-seryl-[protein] + ATP = O-phospho-L-seryl-[protein] + ADP + H(+)</text>
        <dbReference type="Rhea" id="RHEA:17989"/>
        <dbReference type="Rhea" id="RHEA-COMP:9863"/>
        <dbReference type="Rhea" id="RHEA-COMP:11604"/>
        <dbReference type="ChEBI" id="CHEBI:15378"/>
        <dbReference type="ChEBI" id="CHEBI:29999"/>
        <dbReference type="ChEBI" id="CHEBI:30616"/>
        <dbReference type="ChEBI" id="CHEBI:83421"/>
        <dbReference type="ChEBI" id="CHEBI:456216"/>
        <dbReference type="EC" id="2.7.11.1"/>
    </reaction>
</comment>
<comment type="catalytic activity">
    <reaction>
        <text>L-threonyl-[protein] + ATP = O-phospho-L-threonyl-[protein] + ADP + H(+)</text>
        <dbReference type="Rhea" id="RHEA:46608"/>
        <dbReference type="Rhea" id="RHEA-COMP:11060"/>
        <dbReference type="Rhea" id="RHEA-COMP:11605"/>
        <dbReference type="ChEBI" id="CHEBI:15378"/>
        <dbReference type="ChEBI" id="CHEBI:30013"/>
        <dbReference type="ChEBI" id="CHEBI:30616"/>
        <dbReference type="ChEBI" id="CHEBI:61977"/>
        <dbReference type="ChEBI" id="CHEBI:456216"/>
        <dbReference type="EC" id="2.7.11.1"/>
    </reaction>
</comment>
<comment type="similarity">
    <text evidence="6">Belongs to the protein kinase superfamily. STE Ser/Thr protein kinase family. COT1 subfamily.</text>
</comment>
<protein>
    <recommendedName>
        <fullName>Serine/threonine-protein kinase CBK1</fullName>
        <ecNumber>2.7.11.1</ecNumber>
    </recommendedName>
</protein>
<name>CBK1_YARLI</name>
<evidence type="ECO:0000250" key="1"/>
<evidence type="ECO:0000255" key="2">
    <source>
        <dbReference type="PROSITE-ProRule" id="PRU00159"/>
    </source>
</evidence>
<evidence type="ECO:0000255" key="3">
    <source>
        <dbReference type="PROSITE-ProRule" id="PRU00618"/>
    </source>
</evidence>
<evidence type="ECO:0000255" key="4">
    <source>
        <dbReference type="PROSITE-ProRule" id="PRU10027"/>
    </source>
</evidence>
<evidence type="ECO:0000256" key="5">
    <source>
        <dbReference type="SAM" id="MobiDB-lite"/>
    </source>
</evidence>
<evidence type="ECO:0000305" key="6"/>
<reference key="1">
    <citation type="journal article" date="2004" name="Nature">
        <title>Genome evolution in yeasts.</title>
        <authorList>
            <person name="Dujon B."/>
            <person name="Sherman D."/>
            <person name="Fischer G."/>
            <person name="Durrens P."/>
            <person name="Casaregola S."/>
            <person name="Lafontaine I."/>
            <person name="de Montigny J."/>
            <person name="Marck C."/>
            <person name="Neuveglise C."/>
            <person name="Talla E."/>
            <person name="Goffard N."/>
            <person name="Frangeul L."/>
            <person name="Aigle M."/>
            <person name="Anthouard V."/>
            <person name="Babour A."/>
            <person name="Barbe V."/>
            <person name="Barnay S."/>
            <person name="Blanchin S."/>
            <person name="Beckerich J.-M."/>
            <person name="Beyne E."/>
            <person name="Bleykasten C."/>
            <person name="Boisrame A."/>
            <person name="Boyer J."/>
            <person name="Cattolico L."/>
            <person name="Confanioleri F."/>
            <person name="de Daruvar A."/>
            <person name="Despons L."/>
            <person name="Fabre E."/>
            <person name="Fairhead C."/>
            <person name="Ferry-Dumazet H."/>
            <person name="Groppi A."/>
            <person name="Hantraye F."/>
            <person name="Hennequin C."/>
            <person name="Jauniaux N."/>
            <person name="Joyet P."/>
            <person name="Kachouri R."/>
            <person name="Kerrest A."/>
            <person name="Koszul R."/>
            <person name="Lemaire M."/>
            <person name="Lesur I."/>
            <person name="Ma L."/>
            <person name="Muller H."/>
            <person name="Nicaud J.-M."/>
            <person name="Nikolski M."/>
            <person name="Oztas S."/>
            <person name="Ozier-Kalogeropoulos O."/>
            <person name="Pellenz S."/>
            <person name="Potier S."/>
            <person name="Richard G.-F."/>
            <person name="Straub M.-L."/>
            <person name="Suleau A."/>
            <person name="Swennen D."/>
            <person name="Tekaia F."/>
            <person name="Wesolowski-Louvel M."/>
            <person name="Westhof E."/>
            <person name="Wirth B."/>
            <person name="Zeniou-Meyer M."/>
            <person name="Zivanovic Y."/>
            <person name="Bolotin-Fukuhara M."/>
            <person name="Thierry A."/>
            <person name="Bouchier C."/>
            <person name="Caudron B."/>
            <person name="Scarpelli C."/>
            <person name="Gaillardin C."/>
            <person name="Weissenbach J."/>
            <person name="Wincker P."/>
            <person name="Souciet J.-L."/>
        </authorList>
    </citation>
    <scope>NUCLEOTIDE SEQUENCE [LARGE SCALE GENOMIC DNA]</scope>
    <source>
        <strain>CLIB 122 / E 150</strain>
    </source>
</reference>